<reference key="1">
    <citation type="journal article" date="2006" name="Appl. Environ. Microbiol.">
        <title>Complete genome sequence of the marine, chemolithoautotrophic, ammonia-oxidizing bacterium Nitrosococcus oceani ATCC 19707.</title>
        <authorList>
            <person name="Klotz M.G."/>
            <person name="Arp D.J."/>
            <person name="Chain P.S.G."/>
            <person name="El-Sheikh A.F."/>
            <person name="Hauser L.J."/>
            <person name="Hommes N.G."/>
            <person name="Larimer F.W."/>
            <person name="Malfatti S.A."/>
            <person name="Norton J.M."/>
            <person name="Poret-Peterson A.T."/>
            <person name="Vergez L.M."/>
            <person name="Ward B.B."/>
        </authorList>
    </citation>
    <scope>NUCLEOTIDE SEQUENCE [LARGE SCALE GENOMIC DNA]</scope>
    <source>
        <strain>ATCC 19707 / BCRC 17464 / JCM 30415 / NCIMB 11848 / C-107</strain>
    </source>
</reference>
<gene>
    <name evidence="1" type="primary">ureE</name>
    <name type="ordered locus">Noc_2879</name>
</gene>
<dbReference type="EMBL" id="CP000127">
    <property type="protein sequence ID" value="ABA59325.1"/>
    <property type="molecule type" value="Genomic_DNA"/>
</dbReference>
<dbReference type="RefSeq" id="WP_002813797.1">
    <property type="nucleotide sequence ID" value="NC_007484.1"/>
</dbReference>
<dbReference type="SMR" id="Q3J771"/>
<dbReference type="STRING" id="323261.Noc_2879"/>
<dbReference type="KEGG" id="noc:Noc_2879"/>
<dbReference type="eggNOG" id="COG2371">
    <property type="taxonomic scope" value="Bacteria"/>
</dbReference>
<dbReference type="HOGENOM" id="CLU_093757_2_0_6"/>
<dbReference type="InParanoid" id="Q3J771"/>
<dbReference type="Proteomes" id="UP000006838">
    <property type="component" value="Chromosome"/>
</dbReference>
<dbReference type="GO" id="GO:0005737">
    <property type="term" value="C:cytoplasm"/>
    <property type="evidence" value="ECO:0007669"/>
    <property type="project" value="UniProtKB-SubCell"/>
</dbReference>
<dbReference type="GO" id="GO:0016151">
    <property type="term" value="F:nickel cation binding"/>
    <property type="evidence" value="ECO:0007669"/>
    <property type="project" value="UniProtKB-UniRule"/>
</dbReference>
<dbReference type="GO" id="GO:0051082">
    <property type="term" value="F:unfolded protein binding"/>
    <property type="evidence" value="ECO:0007669"/>
    <property type="project" value="UniProtKB-UniRule"/>
</dbReference>
<dbReference type="GO" id="GO:0006457">
    <property type="term" value="P:protein folding"/>
    <property type="evidence" value="ECO:0007669"/>
    <property type="project" value="InterPro"/>
</dbReference>
<dbReference type="GO" id="GO:0065003">
    <property type="term" value="P:protein-containing complex assembly"/>
    <property type="evidence" value="ECO:0007669"/>
    <property type="project" value="InterPro"/>
</dbReference>
<dbReference type="GO" id="GO:0019627">
    <property type="term" value="P:urea metabolic process"/>
    <property type="evidence" value="ECO:0007669"/>
    <property type="project" value="InterPro"/>
</dbReference>
<dbReference type="CDD" id="cd00571">
    <property type="entry name" value="UreE"/>
    <property type="match status" value="1"/>
</dbReference>
<dbReference type="Gene3D" id="2.60.260.20">
    <property type="entry name" value="Urease metallochaperone UreE, N-terminal domain"/>
    <property type="match status" value="1"/>
</dbReference>
<dbReference type="Gene3D" id="3.30.70.790">
    <property type="entry name" value="UreE, C-terminal domain"/>
    <property type="match status" value="1"/>
</dbReference>
<dbReference type="HAMAP" id="MF_00822">
    <property type="entry name" value="UreE"/>
    <property type="match status" value="1"/>
</dbReference>
<dbReference type="InterPro" id="IPR012406">
    <property type="entry name" value="UreE"/>
</dbReference>
<dbReference type="InterPro" id="IPR007864">
    <property type="entry name" value="UreE_C_dom"/>
</dbReference>
<dbReference type="InterPro" id="IPR004029">
    <property type="entry name" value="UreE_N"/>
</dbReference>
<dbReference type="InterPro" id="IPR036118">
    <property type="entry name" value="UreE_N_sf"/>
</dbReference>
<dbReference type="NCBIfam" id="NF009751">
    <property type="entry name" value="PRK13261.1-1"/>
    <property type="match status" value="1"/>
</dbReference>
<dbReference type="Pfam" id="PF05194">
    <property type="entry name" value="UreE_C"/>
    <property type="match status" value="1"/>
</dbReference>
<dbReference type="Pfam" id="PF02814">
    <property type="entry name" value="UreE_N"/>
    <property type="match status" value="1"/>
</dbReference>
<dbReference type="PIRSF" id="PIRSF036402">
    <property type="entry name" value="Ureas_acces_UreE"/>
    <property type="match status" value="1"/>
</dbReference>
<dbReference type="SMART" id="SM00988">
    <property type="entry name" value="UreE_N"/>
    <property type="match status" value="1"/>
</dbReference>
<dbReference type="SUPFAM" id="SSF69737">
    <property type="entry name" value="Urease metallochaperone UreE, C-terminal domain"/>
    <property type="match status" value="1"/>
</dbReference>
<dbReference type="SUPFAM" id="SSF69287">
    <property type="entry name" value="Urease metallochaperone UreE, N-terminal domain"/>
    <property type="match status" value="1"/>
</dbReference>
<keyword id="KW-0143">Chaperone</keyword>
<keyword id="KW-0963">Cytoplasm</keyword>
<keyword id="KW-0533">Nickel</keyword>
<keyword id="KW-0996">Nickel insertion</keyword>
<keyword id="KW-1185">Reference proteome</keyword>
<protein>
    <recommendedName>
        <fullName evidence="1">Urease accessory protein UreE</fullName>
    </recommendedName>
</protein>
<feature type="chain" id="PRO_1000083901" description="Urease accessory protein UreE">
    <location>
        <begin position="1"/>
        <end position="167"/>
    </location>
</feature>
<feature type="region of interest" description="Disordered" evidence="2">
    <location>
        <begin position="135"/>
        <end position="167"/>
    </location>
</feature>
<feature type="compositionally biased region" description="Basic residues" evidence="2">
    <location>
        <begin position="157"/>
        <end position="167"/>
    </location>
</feature>
<organism>
    <name type="scientific">Nitrosococcus oceani (strain ATCC 19707 / BCRC 17464 / JCM 30415 / NCIMB 11848 / C-107)</name>
    <dbReference type="NCBI Taxonomy" id="323261"/>
    <lineage>
        <taxon>Bacteria</taxon>
        <taxon>Pseudomonadati</taxon>
        <taxon>Pseudomonadota</taxon>
        <taxon>Gammaproteobacteria</taxon>
        <taxon>Chromatiales</taxon>
        <taxon>Chromatiaceae</taxon>
        <taxon>Nitrosococcus</taxon>
    </lineage>
</organism>
<sequence length="167" mass="18948">MLCFERRLPSDTPADLEMAFTFEQRERSRLRFPLPDGREAAFLIERGAPLVEGERLGTAEGLVLAIQAKPELLMEVRTSDPLTLVRAAYHLGNRHVRLEIGAHWLRLPPDYVLRDMLMRLGVEVFEVTAPYQPESGAYGGGHHHSHSHHEGDEFHSKPRLHHFGGSQ</sequence>
<evidence type="ECO:0000255" key="1">
    <source>
        <dbReference type="HAMAP-Rule" id="MF_00822"/>
    </source>
</evidence>
<evidence type="ECO:0000256" key="2">
    <source>
        <dbReference type="SAM" id="MobiDB-lite"/>
    </source>
</evidence>
<comment type="function">
    <text evidence="1">Involved in urease metallocenter assembly. Binds nickel. Probably functions as a nickel donor during metallocenter assembly.</text>
</comment>
<comment type="subcellular location">
    <subcellularLocation>
        <location evidence="1">Cytoplasm</location>
    </subcellularLocation>
</comment>
<comment type="similarity">
    <text evidence="1">Belongs to the UreE family.</text>
</comment>
<proteinExistence type="inferred from homology"/>
<accession>Q3J771</accession>
<name>UREE_NITOC</name>